<feature type="chain" id="PRO_0000355674" description="Large ribosomal subunit protein uL24">
    <location>
        <begin position="1"/>
        <end position="112"/>
    </location>
</feature>
<comment type="function">
    <text evidence="1">One of two assembly initiator proteins, it binds directly to the 5'-end of the 23S rRNA, where it nucleates assembly of the 50S subunit.</text>
</comment>
<comment type="function">
    <text evidence="1">One of the proteins that surrounds the polypeptide exit tunnel on the outside of the subunit.</text>
</comment>
<comment type="subunit">
    <text evidence="1">Part of the 50S ribosomal subunit.</text>
</comment>
<comment type="similarity">
    <text evidence="1">Belongs to the universal ribosomal protein uL24 family.</text>
</comment>
<accession>Q250M1</accession>
<reference key="1">
    <citation type="journal article" date="2006" name="J. Bacteriol.">
        <title>Complete genome sequence of the dehalorespiring bacterium Desulfitobacterium hafniense Y51 and comparison with Dehalococcoides ethenogenes 195.</title>
        <authorList>
            <person name="Nonaka H."/>
            <person name="Keresztes G."/>
            <person name="Shinoda Y."/>
            <person name="Ikenaga Y."/>
            <person name="Abe M."/>
            <person name="Naito K."/>
            <person name="Inatomi K."/>
            <person name="Furukawa K."/>
            <person name="Inui M."/>
            <person name="Yukawa H."/>
        </authorList>
    </citation>
    <scope>NUCLEOTIDE SEQUENCE [LARGE SCALE GENOMIC DNA]</scope>
    <source>
        <strain>Y51</strain>
    </source>
</reference>
<name>RL24_DESHY</name>
<sequence>MAAVKQKMHVKKGDMVMVITGKDAGKKGKVLEVFPKKGRVVIEKVNIVKRHTKPSQSMPQGGIFEKEAPIASSNVMLYCTECNKVTRVSVKETEAGKVRVCKKCGVNLPDKK</sequence>
<evidence type="ECO:0000255" key="1">
    <source>
        <dbReference type="HAMAP-Rule" id="MF_01326"/>
    </source>
</evidence>
<evidence type="ECO:0000305" key="2"/>
<gene>
    <name evidence="1" type="primary">rplX</name>
    <name type="ordered locus">DSY0482</name>
</gene>
<organism>
    <name type="scientific">Desulfitobacterium hafniense (strain Y51)</name>
    <dbReference type="NCBI Taxonomy" id="138119"/>
    <lineage>
        <taxon>Bacteria</taxon>
        <taxon>Bacillati</taxon>
        <taxon>Bacillota</taxon>
        <taxon>Clostridia</taxon>
        <taxon>Eubacteriales</taxon>
        <taxon>Desulfitobacteriaceae</taxon>
        <taxon>Desulfitobacterium</taxon>
    </lineage>
</organism>
<keyword id="KW-1185">Reference proteome</keyword>
<keyword id="KW-0687">Ribonucleoprotein</keyword>
<keyword id="KW-0689">Ribosomal protein</keyword>
<keyword id="KW-0694">RNA-binding</keyword>
<keyword id="KW-0699">rRNA-binding</keyword>
<protein>
    <recommendedName>
        <fullName evidence="1">Large ribosomal subunit protein uL24</fullName>
    </recommendedName>
    <alternativeName>
        <fullName evidence="2">50S ribosomal protein L24</fullName>
    </alternativeName>
</protein>
<dbReference type="EMBL" id="AP008230">
    <property type="protein sequence ID" value="BAE82271.1"/>
    <property type="molecule type" value="Genomic_DNA"/>
</dbReference>
<dbReference type="RefSeq" id="WP_011459102.1">
    <property type="nucleotide sequence ID" value="NC_007907.1"/>
</dbReference>
<dbReference type="SMR" id="Q250M1"/>
<dbReference type="STRING" id="138119.DSY0482"/>
<dbReference type="KEGG" id="dsy:DSY0482"/>
<dbReference type="eggNOG" id="COG0198">
    <property type="taxonomic scope" value="Bacteria"/>
</dbReference>
<dbReference type="HOGENOM" id="CLU_093315_2_3_9"/>
<dbReference type="Proteomes" id="UP000001946">
    <property type="component" value="Chromosome"/>
</dbReference>
<dbReference type="GO" id="GO:1990904">
    <property type="term" value="C:ribonucleoprotein complex"/>
    <property type="evidence" value="ECO:0007669"/>
    <property type="project" value="UniProtKB-KW"/>
</dbReference>
<dbReference type="GO" id="GO:0005840">
    <property type="term" value="C:ribosome"/>
    <property type="evidence" value="ECO:0007669"/>
    <property type="project" value="UniProtKB-KW"/>
</dbReference>
<dbReference type="GO" id="GO:0019843">
    <property type="term" value="F:rRNA binding"/>
    <property type="evidence" value="ECO:0007669"/>
    <property type="project" value="UniProtKB-UniRule"/>
</dbReference>
<dbReference type="GO" id="GO:0003735">
    <property type="term" value="F:structural constituent of ribosome"/>
    <property type="evidence" value="ECO:0007669"/>
    <property type="project" value="InterPro"/>
</dbReference>
<dbReference type="GO" id="GO:0006412">
    <property type="term" value="P:translation"/>
    <property type="evidence" value="ECO:0007669"/>
    <property type="project" value="UniProtKB-UniRule"/>
</dbReference>
<dbReference type="CDD" id="cd06089">
    <property type="entry name" value="KOW_RPL26"/>
    <property type="match status" value="1"/>
</dbReference>
<dbReference type="FunFam" id="2.30.30.30:FF:000004">
    <property type="entry name" value="50S ribosomal protein L24"/>
    <property type="match status" value="1"/>
</dbReference>
<dbReference type="Gene3D" id="2.30.30.30">
    <property type="match status" value="1"/>
</dbReference>
<dbReference type="HAMAP" id="MF_01326_B">
    <property type="entry name" value="Ribosomal_uL24_B"/>
    <property type="match status" value="1"/>
</dbReference>
<dbReference type="InterPro" id="IPR005824">
    <property type="entry name" value="KOW"/>
</dbReference>
<dbReference type="InterPro" id="IPR014722">
    <property type="entry name" value="Rib_uL2_dom2"/>
</dbReference>
<dbReference type="InterPro" id="IPR003256">
    <property type="entry name" value="Ribosomal_uL24"/>
</dbReference>
<dbReference type="InterPro" id="IPR005825">
    <property type="entry name" value="Ribosomal_uL24_CS"/>
</dbReference>
<dbReference type="InterPro" id="IPR041988">
    <property type="entry name" value="Ribosomal_uL24_KOW"/>
</dbReference>
<dbReference type="InterPro" id="IPR008991">
    <property type="entry name" value="Translation_prot_SH3-like_sf"/>
</dbReference>
<dbReference type="NCBIfam" id="TIGR01079">
    <property type="entry name" value="rplX_bact"/>
    <property type="match status" value="1"/>
</dbReference>
<dbReference type="PANTHER" id="PTHR12903">
    <property type="entry name" value="MITOCHONDRIAL RIBOSOMAL PROTEIN L24"/>
    <property type="match status" value="1"/>
</dbReference>
<dbReference type="Pfam" id="PF00467">
    <property type="entry name" value="KOW"/>
    <property type="match status" value="1"/>
</dbReference>
<dbReference type="Pfam" id="PF17136">
    <property type="entry name" value="ribosomal_L24"/>
    <property type="match status" value="1"/>
</dbReference>
<dbReference type="SMART" id="SM00739">
    <property type="entry name" value="KOW"/>
    <property type="match status" value="1"/>
</dbReference>
<dbReference type="SUPFAM" id="SSF50104">
    <property type="entry name" value="Translation proteins SH3-like domain"/>
    <property type="match status" value="1"/>
</dbReference>
<dbReference type="PROSITE" id="PS01108">
    <property type="entry name" value="RIBOSOMAL_L24"/>
    <property type="match status" value="1"/>
</dbReference>
<proteinExistence type="inferred from homology"/>